<protein>
    <recommendedName>
        <fullName evidence="1">Small ribosomal subunit protein bS20c</fullName>
    </recommendedName>
    <alternativeName>
        <fullName evidence="2">30S ribosomal protein S20, chloroplastic</fullName>
    </alternativeName>
</protein>
<evidence type="ECO:0000255" key="1">
    <source>
        <dbReference type="HAMAP-Rule" id="MF_00500"/>
    </source>
</evidence>
<evidence type="ECO:0000305" key="2"/>
<dbReference type="EMBL" id="Z67753">
    <property type="protein sequence ID" value="CAA91743.1"/>
    <property type="molecule type" value="Genomic_DNA"/>
</dbReference>
<dbReference type="PIR" id="S78370">
    <property type="entry name" value="S78370"/>
</dbReference>
<dbReference type="RefSeq" id="NP_043711.1">
    <property type="nucleotide sequence ID" value="NC_001713.1"/>
</dbReference>
<dbReference type="SMR" id="P49507"/>
<dbReference type="GeneID" id="801761"/>
<dbReference type="GO" id="GO:0009507">
    <property type="term" value="C:chloroplast"/>
    <property type="evidence" value="ECO:0007669"/>
    <property type="project" value="UniProtKB-SubCell"/>
</dbReference>
<dbReference type="GO" id="GO:0015935">
    <property type="term" value="C:small ribosomal subunit"/>
    <property type="evidence" value="ECO:0007669"/>
    <property type="project" value="TreeGrafter"/>
</dbReference>
<dbReference type="GO" id="GO:0070181">
    <property type="term" value="F:small ribosomal subunit rRNA binding"/>
    <property type="evidence" value="ECO:0007669"/>
    <property type="project" value="TreeGrafter"/>
</dbReference>
<dbReference type="GO" id="GO:0003735">
    <property type="term" value="F:structural constituent of ribosome"/>
    <property type="evidence" value="ECO:0007669"/>
    <property type="project" value="InterPro"/>
</dbReference>
<dbReference type="GO" id="GO:0006412">
    <property type="term" value="P:translation"/>
    <property type="evidence" value="ECO:0007669"/>
    <property type="project" value="UniProtKB-UniRule"/>
</dbReference>
<dbReference type="FunFam" id="1.20.58.110:FF:000001">
    <property type="entry name" value="30S ribosomal protein S20"/>
    <property type="match status" value="1"/>
</dbReference>
<dbReference type="Gene3D" id="1.20.58.110">
    <property type="entry name" value="Ribosomal protein S20"/>
    <property type="match status" value="1"/>
</dbReference>
<dbReference type="HAMAP" id="MF_00500">
    <property type="entry name" value="Ribosomal_bS20"/>
    <property type="match status" value="1"/>
</dbReference>
<dbReference type="InterPro" id="IPR002583">
    <property type="entry name" value="Ribosomal_bS20"/>
</dbReference>
<dbReference type="InterPro" id="IPR036510">
    <property type="entry name" value="Ribosomal_bS20_sf"/>
</dbReference>
<dbReference type="NCBIfam" id="TIGR00029">
    <property type="entry name" value="S20"/>
    <property type="match status" value="1"/>
</dbReference>
<dbReference type="PANTHER" id="PTHR33398">
    <property type="entry name" value="30S RIBOSOMAL PROTEIN S20"/>
    <property type="match status" value="1"/>
</dbReference>
<dbReference type="PANTHER" id="PTHR33398:SF1">
    <property type="entry name" value="SMALL RIBOSOMAL SUBUNIT PROTEIN BS20C"/>
    <property type="match status" value="1"/>
</dbReference>
<dbReference type="Pfam" id="PF01649">
    <property type="entry name" value="Ribosomal_S20p"/>
    <property type="match status" value="1"/>
</dbReference>
<dbReference type="SUPFAM" id="SSF46992">
    <property type="entry name" value="Ribosomal protein S20"/>
    <property type="match status" value="1"/>
</dbReference>
<reference key="1">
    <citation type="journal article" date="1995" name="Plant Mol. Biol. Rep.">
        <title>The chloroplast genome of a chlorophyll a+c-containing alga, Odontella sinensis.</title>
        <authorList>
            <person name="Kowallik K.V."/>
            <person name="Stoebe B."/>
            <person name="Schaffran I."/>
            <person name="Kroth-Pancic P."/>
            <person name="Freier U."/>
        </authorList>
    </citation>
    <scope>NUCLEOTIDE SEQUENCE [LARGE SCALE GENOMIC DNA]</scope>
</reference>
<name>RR20_TRICV</name>
<proteinExistence type="inferred from homology"/>
<comment type="function">
    <text evidence="1">Binds directly to 16S ribosomal RNA.</text>
</comment>
<comment type="subcellular location">
    <subcellularLocation>
        <location>Plastid</location>
        <location>Chloroplast</location>
    </subcellularLocation>
</comment>
<comment type="similarity">
    <text evidence="1">Belongs to the bacterial ribosomal protein bS20 family.</text>
</comment>
<gene>
    <name evidence="1" type="primary">rps20</name>
</gene>
<organism>
    <name type="scientific">Trieres chinensis</name>
    <name type="common">Marine centric diatom</name>
    <name type="synonym">Odontella sinensis</name>
    <dbReference type="NCBI Taxonomy" id="1514140"/>
    <lineage>
        <taxon>Eukaryota</taxon>
        <taxon>Sar</taxon>
        <taxon>Stramenopiles</taxon>
        <taxon>Ochrophyta</taxon>
        <taxon>Bacillariophyta</taxon>
        <taxon>Mediophyceae</taxon>
        <taxon>Biddulphiophycidae</taxon>
        <taxon>Eupodiscales</taxon>
        <taxon>Parodontellaceae</taxon>
        <taxon>Trieres</taxon>
    </lineage>
</organism>
<accession>P49507</accession>
<keyword id="KW-0150">Chloroplast</keyword>
<keyword id="KW-0934">Plastid</keyword>
<keyword id="KW-0687">Ribonucleoprotein</keyword>
<keyword id="KW-0689">Ribosomal protein</keyword>
<keyword id="KW-0694">RNA-binding</keyword>
<keyword id="KW-0699">rRNA-binding</keyword>
<geneLocation type="chloroplast"/>
<sequence length="93" mass="10811">MANNASAEKRILINERNRLQNRFYKSSVRTLTKLYLKDLEVYKISRNPSDKEKAKNRLSLVYSLIDKGSKRNVFHKNTAARKKSKLASQLKIA</sequence>
<feature type="chain" id="PRO_0000168074" description="Small ribosomal subunit protein bS20c">
    <location>
        <begin position="1"/>
        <end position="93"/>
    </location>
</feature>